<accession>Q15TR4</accession>
<reference key="1">
    <citation type="submission" date="2006-06" db="EMBL/GenBank/DDBJ databases">
        <title>Complete sequence of Pseudoalteromonas atlantica T6c.</title>
        <authorList>
            <consortium name="US DOE Joint Genome Institute"/>
            <person name="Copeland A."/>
            <person name="Lucas S."/>
            <person name="Lapidus A."/>
            <person name="Barry K."/>
            <person name="Detter J.C."/>
            <person name="Glavina del Rio T."/>
            <person name="Hammon N."/>
            <person name="Israni S."/>
            <person name="Dalin E."/>
            <person name="Tice H."/>
            <person name="Pitluck S."/>
            <person name="Saunders E."/>
            <person name="Brettin T."/>
            <person name="Bruce D."/>
            <person name="Han C."/>
            <person name="Tapia R."/>
            <person name="Gilna P."/>
            <person name="Schmutz J."/>
            <person name="Larimer F."/>
            <person name="Land M."/>
            <person name="Hauser L."/>
            <person name="Kyrpides N."/>
            <person name="Kim E."/>
            <person name="Karls A.C."/>
            <person name="Bartlett D."/>
            <person name="Higgins B.P."/>
            <person name="Richardson P."/>
        </authorList>
    </citation>
    <scope>NUCLEOTIDE SEQUENCE [LARGE SCALE GENOMIC DNA]</scope>
    <source>
        <strain>T6c / ATCC BAA-1087</strain>
    </source>
</reference>
<feature type="chain" id="PRO_0000374460" description="tRNA-2-methylthio-N(6)-dimethylallyladenosine synthase">
    <location>
        <begin position="1"/>
        <end position="477"/>
    </location>
</feature>
<feature type="domain" description="MTTase N-terminal" evidence="1">
    <location>
        <begin position="3"/>
        <end position="120"/>
    </location>
</feature>
<feature type="domain" description="Radical SAM core" evidence="2">
    <location>
        <begin position="143"/>
        <end position="375"/>
    </location>
</feature>
<feature type="domain" description="TRAM" evidence="1">
    <location>
        <begin position="378"/>
        <end position="441"/>
    </location>
</feature>
<feature type="binding site" evidence="1">
    <location>
        <position position="12"/>
    </location>
    <ligand>
        <name>[4Fe-4S] cluster</name>
        <dbReference type="ChEBI" id="CHEBI:49883"/>
        <label>1</label>
    </ligand>
</feature>
<feature type="binding site" evidence="1">
    <location>
        <position position="49"/>
    </location>
    <ligand>
        <name>[4Fe-4S] cluster</name>
        <dbReference type="ChEBI" id="CHEBI:49883"/>
        <label>1</label>
    </ligand>
</feature>
<feature type="binding site" evidence="1">
    <location>
        <position position="83"/>
    </location>
    <ligand>
        <name>[4Fe-4S] cluster</name>
        <dbReference type="ChEBI" id="CHEBI:49883"/>
        <label>1</label>
    </ligand>
</feature>
<feature type="binding site" evidence="1">
    <location>
        <position position="157"/>
    </location>
    <ligand>
        <name>[4Fe-4S] cluster</name>
        <dbReference type="ChEBI" id="CHEBI:49883"/>
        <label>2</label>
        <note>4Fe-4S-S-AdoMet</note>
    </ligand>
</feature>
<feature type="binding site" evidence="1">
    <location>
        <position position="161"/>
    </location>
    <ligand>
        <name>[4Fe-4S] cluster</name>
        <dbReference type="ChEBI" id="CHEBI:49883"/>
        <label>2</label>
        <note>4Fe-4S-S-AdoMet</note>
    </ligand>
</feature>
<feature type="binding site" evidence="1">
    <location>
        <position position="164"/>
    </location>
    <ligand>
        <name>[4Fe-4S] cluster</name>
        <dbReference type="ChEBI" id="CHEBI:49883"/>
        <label>2</label>
        <note>4Fe-4S-S-AdoMet</note>
    </ligand>
</feature>
<gene>
    <name evidence="1" type="primary">miaB</name>
    <name type="ordered locus">Patl_2206</name>
</gene>
<organism>
    <name type="scientific">Pseudoalteromonas atlantica (strain T6c / ATCC BAA-1087)</name>
    <dbReference type="NCBI Taxonomy" id="3042615"/>
    <lineage>
        <taxon>Bacteria</taxon>
        <taxon>Pseudomonadati</taxon>
        <taxon>Pseudomonadota</taxon>
        <taxon>Gammaproteobacteria</taxon>
        <taxon>Alteromonadales</taxon>
        <taxon>Alteromonadaceae</taxon>
        <taxon>Paraglaciecola</taxon>
    </lineage>
</organism>
<sequence length="477" mass="53281">MTKKLFIKTWGCQMNEYDSQKMADLLDSTHGYQVADTAEEADIILLNTCSIREKAQEKVFHQLGRWKNLKQDKPELIIGVGGCVASQEGQVIRQRAPFVDLVFGPQTLHRLPEMINQIKGGSSSVIDISFPEIEKFDRLPEPKAEGPTAFVSIMEGCSKYCTFCVVPYTRGEEVSRPVDDVLLEVAQLAEQGVREVNLLGQNVNAFRGPHHDGAICTFAELLEMVASIDGIDRIRYTTSHPVEFTDDIIDAYATIPELVDHLHLPVQSGSDRVLNLMKRGHTAIEYKSKIRKLRKIRPNLSMSSDFIIGFPGETDDDFEATMDLIQAMDFDLSFSFIYSARPGTPAADLPDDVSETTKKERLQLLQNRITQQALRIARNMIDSEQRVLVEGPSKKNPMELSGRTENNRVVNFEGTPDMIGGFVDVKITDVFANSLRGDVLRKEADMNLRINVAPQAILAKQTNKTDALGVAQFVPAH</sequence>
<protein>
    <recommendedName>
        <fullName evidence="1">tRNA-2-methylthio-N(6)-dimethylallyladenosine synthase</fullName>
        <ecNumber evidence="1">2.8.4.3</ecNumber>
    </recommendedName>
    <alternativeName>
        <fullName evidence="1">(Dimethylallyl)adenosine tRNA methylthiotransferase MiaB</fullName>
    </alternativeName>
    <alternativeName>
        <fullName evidence="1">tRNA-i(6)A37 methylthiotransferase</fullName>
    </alternativeName>
</protein>
<name>MIAB_PSEA6</name>
<keyword id="KW-0004">4Fe-4S</keyword>
<keyword id="KW-0963">Cytoplasm</keyword>
<keyword id="KW-0408">Iron</keyword>
<keyword id="KW-0411">Iron-sulfur</keyword>
<keyword id="KW-0479">Metal-binding</keyword>
<keyword id="KW-0949">S-adenosyl-L-methionine</keyword>
<keyword id="KW-0808">Transferase</keyword>
<keyword id="KW-0819">tRNA processing</keyword>
<proteinExistence type="inferred from homology"/>
<comment type="function">
    <text evidence="1">Catalyzes the methylthiolation of N6-(dimethylallyl)adenosine (i(6)A), leading to the formation of 2-methylthio-N6-(dimethylallyl)adenosine (ms(2)i(6)A) at position 37 in tRNAs that read codons beginning with uridine.</text>
</comment>
<comment type="catalytic activity">
    <reaction evidence="1">
        <text>N(6)-dimethylallyladenosine(37) in tRNA + (sulfur carrier)-SH + AH2 + 2 S-adenosyl-L-methionine = 2-methylsulfanyl-N(6)-dimethylallyladenosine(37) in tRNA + (sulfur carrier)-H + 5'-deoxyadenosine + L-methionine + A + S-adenosyl-L-homocysteine + 2 H(+)</text>
        <dbReference type="Rhea" id="RHEA:37067"/>
        <dbReference type="Rhea" id="RHEA-COMP:10375"/>
        <dbReference type="Rhea" id="RHEA-COMP:10376"/>
        <dbReference type="Rhea" id="RHEA-COMP:14737"/>
        <dbReference type="Rhea" id="RHEA-COMP:14739"/>
        <dbReference type="ChEBI" id="CHEBI:13193"/>
        <dbReference type="ChEBI" id="CHEBI:15378"/>
        <dbReference type="ChEBI" id="CHEBI:17319"/>
        <dbReference type="ChEBI" id="CHEBI:17499"/>
        <dbReference type="ChEBI" id="CHEBI:29917"/>
        <dbReference type="ChEBI" id="CHEBI:57844"/>
        <dbReference type="ChEBI" id="CHEBI:57856"/>
        <dbReference type="ChEBI" id="CHEBI:59789"/>
        <dbReference type="ChEBI" id="CHEBI:64428"/>
        <dbReference type="ChEBI" id="CHEBI:74415"/>
        <dbReference type="ChEBI" id="CHEBI:74417"/>
        <dbReference type="EC" id="2.8.4.3"/>
    </reaction>
</comment>
<comment type="cofactor">
    <cofactor evidence="1">
        <name>[4Fe-4S] cluster</name>
        <dbReference type="ChEBI" id="CHEBI:49883"/>
    </cofactor>
    <text evidence="1">Binds 2 [4Fe-4S] clusters. One cluster is coordinated with 3 cysteines and an exchangeable S-adenosyl-L-methionine.</text>
</comment>
<comment type="subunit">
    <text evidence="1">Monomer.</text>
</comment>
<comment type="subcellular location">
    <subcellularLocation>
        <location evidence="1">Cytoplasm</location>
    </subcellularLocation>
</comment>
<comment type="similarity">
    <text evidence="1">Belongs to the methylthiotransferase family. MiaB subfamily.</text>
</comment>
<evidence type="ECO:0000255" key="1">
    <source>
        <dbReference type="HAMAP-Rule" id="MF_01864"/>
    </source>
</evidence>
<evidence type="ECO:0000255" key="2">
    <source>
        <dbReference type="PROSITE-ProRule" id="PRU01266"/>
    </source>
</evidence>
<dbReference type="EC" id="2.8.4.3" evidence="1"/>
<dbReference type="EMBL" id="CP000388">
    <property type="protein sequence ID" value="ABG40724.1"/>
    <property type="molecule type" value="Genomic_DNA"/>
</dbReference>
<dbReference type="RefSeq" id="WP_011575007.1">
    <property type="nucleotide sequence ID" value="NC_008228.1"/>
</dbReference>
<dbReference type="SMR" id="Q15TR4"/>
<dbReference type="STRING" id="342610.Patl_2206"/>
<dbReference type="KEGG" id="pat:Patl_2206"/>
<dbReference type="eggNOG" id="COG0621">
    <property type="taxonomic scope" value="Bacteria"/>
</dbReference>
<dbReference type="HOGENOM" id="CLU_018697_2_0_6"/>
<dbReference type="OrthoDB" id="9805215at2"/>
<dbReference type="Proteomes" id="UP000001981">
    <property type="component" value="Chromosome"/>
</dbReference>
<dbReference type="GO" id="GO:0005829">
    <property type="term" value="C:cytosol"/>
    <property type="evidence" value="ECO:0007669"/>
    <property type="project" value="TreeGrafter"/>
</dbReference>
<dbReference type="GO" id="GO:0051539">
    <property type="term" value="F:4 iron, 4 sulfur cluster binding"/>
    <property type="evidence" value="ECO:0007669"/>
    <property type="project" value="UniProtKB-UniRule"/>
</dbReference>
<dbReference type="GO" id="GO:0046872">
    <property type="term" value="F:metal ion binding"/>
    <property type="evidence" value="ECO:0007669"/>
    <property type="project" value="UniProtKB-KW"/>
</dbReference>
<dbReference type="GO" id="GO:0035597">
    <property type="term" value="F:N6-isopentenyladenosine methylthiotransferase activity"/>
    <property type="evidence" value="ECO:0007669"/>
    <property type="project" value="TreeGrafter"/>
</dbReference>
<dbReference type="CDD" id="cd01335">
    <property type="entry name" value="Radical_SAM"/>
    <property type="match status" value="1"/>
</dbReference>
<dbReference type="FunFam" id="3.40.50.12160:FF:000001">
    <property type="entry name" value="tRNA-2-methylthio-N(6)-dimethylallyladenosine synthase"/>
    <property type="match status" value="1"/>
</dbReference>
<dbReference type="FunFam" id="3.80.30.20:FF:000001">
    <property type="entry name" value="tRNA-2-methylthio-N(6)-dimethylallyladenosine synthase 2"/>
    <property type="match status" value="1"/>
</dbReference>
<dbReference type="Gene3D" id="3.40.50.12160">
    <property type="entry name" value="Methylthiotransferase, N-terminal domain"/>
    <property type="match status" value="1"/>
</dbReference>
<dbReference type="Gene3D" id="3.80.30.20">
    <property type="entry name" value="tm_1862 like domain"/>
    <property type="match status" value="1"/>
</dbReference>
<dbReference type="HAMAP" id="MF_01864">
    <property type="entry name" value="tRNA_metthiotr_MiaB"/>
    <property type="match status" value="1"/>
</dbReference>
<dbReference type="InterPro" id="IPR006638">
    <property type="entry name" value="Elp3/MiaA/NifB-like_rSAM"/>
</dbReference>
<dbReference type="InterPro" id="IPR005839">
    <property type="entry name" value="Methylthiotransferase"/>
</dbReference>
<dbReference type="InterPro" id="IPR020612">
    <property type="entry name" value="Methylthiotransferase_CS"/>
</dbReference>
<dbReference type="InterPro" id="IPR013848">
    <property type="entry name" value="Methylthiotransferase_N"/>
</dbReference>
<dbReference type="InterPro" id="IPR038135">
    <property type="entry name" value="Methylthiotransferase_N_sf"/>
</dbReference>
<dbReference type="InterPro" id="IPR006463">
    <property type="entry name" value="MiaB_methiolase"/>
</dbReference>
<dbReference type="InterPro" id="IPR007197">
    <property type="entry name" value="rSAM"/>
</dbReference>
<dbReference type="InterPro" id="IPR023404">
    <property type="entry name" value="rSAM_horseshoe"/>
</dbReference>
<dbReference type="InterPro" id="IPR002792">
    <property type="entry name" value="TRAM_dom"/>
</dbReference>
<dbReference type="NCBIfam" id="TIGR01574">
    <property type="entry name" value="miaB-methiolase"/>
    <property type="match status" value="1"/>
</dbReference>
<dbReference type="NCBIfam" id="TIGR00089">
    <property type="entry name" value="MiaB/RimO family radical SAM methylthiotransferase"/>
    <property type="match status" value="1"/>
</dbReference>
<dbReference type="PANTHER" id="PTHR43020">
    <property type="entry name" value="CDK5 REGULATORY SUBUNIT-ASSOCIATED PROTEIN 1"/>
    <property type="match status" value="1"/>
</dbReference>
<dbReference type="PANTHER" id="PTHR43020:SF2">
    <property type="entry name" value="MITOCHONDRIAL TRNA METHYLTHIOTRANSFERASE CDK5RAP1"/>
    <property type="match status" value="1"/>
</dbReference>
<dbReference type="Pfam" id="PF04055">
    <property type="entry name" value="Radical_SAM"/>
    <property type="match status" value="1"/>
</dbReference>
<dbReference type="Pfam" id="PF01938">
    <property type="entry name" value="TRAM"/>
    <property type="match status" value="1"/>
</dbReference>
<dbReference type="Pfam" id="PF00919">
    <property type="entry name" value="UPF0004"/>
    <property type="match status" value="1"/>
</dbReference>
<dbReference type="SFLD" id="SFLDF00273">
    <property type="entry name" value="(dimethylallyl)adenosine_tRNA"/>
    <property type="match status" value="1"/>
</dbReference>
<dbReference type="SFLD" id="SFLDG01082">
    <property type="entry name" value="B12-binding_domain_containing"/>
    <property type="match status" value="1"/>
</dbReference>
<dbReference type="SFLD" id="SFLDG01061">
    <property type="entry name" value="methylthiotransferase"/>
    <property type="match status" value="1"/>
</dbReference>
<dbReference type="SMART" id="SM00729">
    <property type="entry name" value="Elp3"/>
    <property type="match status" value="1"/>
</dbReference>
<dbReference type="SUPFAM" id="SSF102114">
    <property type="entry name" value="Radical SAM enzymes"/>
    <property type="match status" value="1"/>
</dbReference>
<dbReference type="PROSITE" id="PS51449">
    <property type="entry name" value="MTTASE_N"/>
    <property type="match status" value="1"/>
</dbReference>
<dbReference type="PROSITE" id="PS01278">
    <property type="entry name" value="MTTASE_RADICAL"/>
    <property type="match status" value="1"/>
</dbReference>
<dbReference type="PROSITE" id="PS51918">
    <property type="entry name" value="RADICAL_SAM"/>
    <property type="match status" value="1"/>
</dbReference>
<dbReference type="PROSITE" id="PS50926">
    <property type="entry name" value="TRAM"/>
    <property type="match status" value="1"/>
</dbReference>